<evidence type="ECO:0000255" key="1">
    <source>
        <dbReference type="HAMAP-Rule" id="MF_00076"/>
    </source>
</evidence>
<accession>Q2YZ91</accession>
<name>HIS7_STAAB</name>
<gene>
    <name evidence="1" type="primary">hisB</name>
    <name type="ordered locus">SAB2552c</name>
</gene>
<keyword id="KW-0028">Amino-acid biosynthesis</keyword>
<keyword id="KW-0963">Cytoplasm</keyword>
<keyword id="KW-0368">Histidine biosynthesis</keyword>
<keyword id="KW-0456">Lyase</keyword>
<proteinExistence type="inferred from homology"/>
<sequence>MIYQKQRNTAETQLNISISDDQSPSHINTGVGFLNHMLTLFTFHSGLSLNIEAQGDIDVDDHHVTEDIGIVIGQLLLEMIKDKKHFVRYGTMYIPMDETLARVVVDISGRPYLSFNATLSKEKVGTFDTELVEEFFRAVVINARLTTHIDLIRGGNTHHEIEAIFKAFSRALGIALTATDDQRVPSSKGVIE</sequence>
<dbReference type="EC" id="4.2.1.19" evidence="1"/>
<dbReference type="EMBL" id="AJ938182">
    <property type="protein sequence ID" value="CAI82240.1"/>
    <property type="molecule type" value="Genomic_DNA"/>
</dbReference>
<dbReference type="RefSeq" id="WP_000640270.1">
    <property type="nucleotide sequence ID" value="NC_007622.1"/>
</dbReference>
<dbReference type="SMR" id="Q2YZ91"/>
<dbReference type="KEGG" id="sab:SAB2552c"/>
<dbReference type="HOGENOM" id="CLU_044308_3_0_9"/>
<dbReference type="UniPathway" id="UPA00031">
    <property type="reaction ID" value="UER00011"/>
</dbReference>
<dbReference type="GO" id="GO:0005737">
    <property type="term" value="C:cytoplasm"/>
    <property type="evidence" value="ECO:0007669"/>
    <property type="project" value="UniProtKB-SubCell"/>
</dbReference>
<dbReference type="GO" id="GO:0004424">
    <property type="term" value="F:imidazoleglycerol-phosphate dehydratase activity"/>
    <property type="evidence" value="ECO:0007669"/>
    <property type="project" value="UniProtKB-UniRule"/>
</dbReference>
<dbReference type="GO" id="GO:0000105">
    <property type="term" value="P:L-histidine biosynthetic process"/>
    <property type="evidence" value="ECO:0007669"/>
    <property type="project" value="UniProtKB-UniRule"/>
</dbReference>
<dbReference type="CDD" id="cd07914">
    <property type="entry name" value="IGPD"/>
    <property type="match status" value="1"/>
</dbReference>
<dbReference type="FunFam" id="3.30.230.40:FF:000001">
    <property type="entry name" value="Imidazoleglycerol-phosphate dehydratase HisB"/>
    <property type="match status" value="1"/>
</dbReference>
<dbReference type="FunFam" id="3.30.230.40:FF:000003">
    <property type="entry name" value="Imidazoleglycerol-phosphate dehydratase HisB"/>
    <property type="match status" value="1"/>
</dbReference>
<dbReference type="Gene3D" id="3.30.230.40">
    <property type="entry name" value="Imidazole glycerol phosphate dehydratase, domain 1"/>
    <property type="match status" value="2"/>
</dbReference>
<dbReference type="HAMAP" id="MF_00076">
    <property type="entry name" value="HisB"/>
    <property type="match status" value="1"/>
</dbReference>
<dbReference type="InterPro" id="IPR038494">
    <property type="entry name" value="IGPD_sf"/>
</dbReference>
<dbReference type="InterPro" id="IPR000807">
    <property type="entry name" value="ImidazoleglycerolP_deHydtase"/>
</dbReference>
<dbReference type="InterPro" id="IPR020565">
    <property type="entry name" value="ImidazoleglycerP_deHydtase_CS"/>
</dbReference>
<dbReference type="InterPro" id="IPR020568">
    <property type="entry name" value="Ribosomal_Su5_D2-typ_SF"/>
</dbReference>
<dbReference type="NCBIfam" id="NF002107">
    <property type="entry name" value="PRK00951.1-2"/>
    <property type="match status" value="1"/>
</dbReference>
<dbReference type="NCBIfam" id="NF002111">
    <property type="entry name" value="PRK00951.2-1"/>
    <property type="match status" value="1"/>
</dbReference>
<dbReference type="NCBIfam" id="NF002114">
    <property type="entry name" value="PRK00951.2-4"/>
    <property type="match status" value="1"/>
</dbReference>
<dbReference type="PANTHER" id="PTHR23133:SF2">
    <property type="entry name" value="IMIDAZOLEGLYCEROL-PHOSPHATE DEHYDRATASE"/>
    <property type="match status" value="1"/>
</dbReference>
<dbReference type="PANTHER" id="PTHR23133">
    <property type="entry name" value="IMIDAZOLEGLYCEROL-PHOSPHATE DEHYDRATASE HIS7"/>
    <property type="match status" value="1"/>
</dbReference>
<dbReference type="Pfam" id="PF00475">
    <property type="entry name" value="IGPD"/>
    <property type="match status" value="1"/>
</dbReference>
<dbReference type="SUPFAM" id="SSF54211">
    <property type="entry name" value="Ribosomal protein S5 domain 2-like"/>
    <property type="match status" value="2"/>
</dbReference>
<dbReference type="PROSITE" id="PS00954">
    <property type="entry name" value="IGP_DEHYDRATASE_1"/>
    <property type="match status" value="1"/>
</dbReference>
<dbReference type="PROSITE" id="PS00955">
    <property type="entry name" value="IGP_DEHYDRATASE_2"/>
    <property type="match status" value="1"/>
</dbReference>
<organism>
    <name type="scientific">Staphylococcus aureus (strain bovine RF122 / ET3-1)</name>
    <dbReference type="NCBI Taxonomy" id="273036"/>
    <lineage>
        <taxon>Bacteria</taxon>
        <taxon>Bacillati</taxon>
        <taxon>Bacillota</taxon>
        <taxon>Bacilli</taxon>
        <taxon>Bacillales</taxon>
        <taxon>Staphylococcaceae</taxon>
        <taxon>Staphylococcus</taxon>
    </lineage>
</organism>
<feature type="chain" id="PRO_1000010358" description="Imidazoleglycerol-phosphate dehydratase">
    <location>
        <begin position="1"/>
        <end position="192"/>
    </location>
</feature>
<protein>
    <recommendedName>
        <fullName evidence="1">Imidazoleglycerol-phosphate dehydratase</fullName>
        <shortName evidence="1">IGPD</shortName>
        <ecNumber evidence="1">4.2.1.19</ecNumber>
    </recommendedName>
</protein>
<comment type="catalytic activity">
    <reaction evidence="1">
        <text>D-erythro-1-(imidazol-4-yl)glycerol 3-phosphate = 3-(imidazol-4-yl)-2-oxopropyl phosphate + H2O</text>
        <dbReference type="Rhea" id="RHEA:11040"/>
        <dbReference type="ChEBI" id="CHEBI:15377"/>
        <dbReference type="ChEBI" id="CHEBI:57766"/>
        <dbReference type="ChEBI" id="CHEBI:58278"/>
        <dbReference type="EC" id="4.2.1.19"/>
    </reaction>
</comment>
<comment type="pathway">
    <text evidence="1">Amino-acid biosynthesis; L-histidine biosynthesis; L-histidine from 5-phospho-alpha-D-ribose 1-diphosphate: step 6/9.</text>
</comment>
<comment type="subcellular location">
    <subcellularLocation>
        <location evidence="1">Cytoplasm</location>
    </subcellularLocation>
</comment>
<comment type="similarity">
    <text evidence="1">Belongs to the imidazoleglycerol-phosphate dehydratase family.</text>
</comment>
<reference key="1">
    <citation type="journal article" date="2007" name="PLoS ONE">
        <title>Molecular correlates of host specialization in Staphylococcus aureus.</title>
        <authorList>
            <person name="Herron-Olson L."/>
            <person name="Fitzgerald J.R."/>
            <person name="Musser J.M."/>
            <person name="Kapur V."/>
        </authorList>
    </citation>
    <scope>NUCLEOTIDE SEQUENCE [LARGE SCALE GENOMIC DNA]</scope>
    <source>
        <strain>bovine RF122 / ET3-1</strain>
    </source>
</reference>